<proteinExistence type="inferred from homology"/>
<gene>
    <name type="ordered locus">jhp_0893</name>
</gene>
<evidence type="ECO:0000250" key="1">
    <source>
        <dbReference type="UniProtKB" id="O25613"/>
    </source>
</evidence>
<evidence type="ECO:0000250" key="2">
    <source>
        <dbReference type="UniProtKB" id="P0AFP6"/>
    </source>
</evidence>
<evidence type="ECO:0000305" key="3"/>
<reference key="1">
    <citation type="journal article" date="1999" name="Nature">
        <title>Genomic sequence comparison of two unrelated isolates of the human gastric pathogen Helicobacter pylori.</title>
        <authorList>
            <person name="Alm R.A."/>
            <person name="Ling L.-S.L."/>
            <person name="Moir D.T."/>
            <person name="King B.L."/>
            <person name="Brown E.D."/>
            <person name="Doig P.C."/>
            <person name="Smith D.R."/>
            <person name="Noonan B."/>
            <person name="Guild B.C."/>
            <person name="deJonge B.L."/>
            <person name="Carmel G."/>
            <person name="Tummino P.J."/>
            <person name="Caruso A."/>
            <person name="Uria-Nickelsen M."/>
            <person name="Mills D.M."/>
            <person name="Ives C."/>
            <person name="Gibson R."/>
            <person name="Merberg D."/>
            <person name="Mills S.D."/>
            <person name="Jiang Q."/>
            <person name="Taylor D.E."/>
            <person name="Vovis G.F."/>
            <person name="Trust T.J."/>
        </authorList>
    </citation>
    <scope>NUCLEOTIDE SEQUENCE [LARGE SCALE GENOMIC DNA]</scope>
    <source>
        <strain>J99 / ATCC 700824</strain>
    </source>
</reference>
<feature type="chain" id="PRO_0000147312" description="GTP cyclohydrolase 1 type 2">
    <location>
        <begin position="1"/>
        <end position="243"/>
    </location>
</feature>
<feature type="binding site" evidence="2">
    <location>
        <position position="63"/>
    </location>
    <ligand>
        <name>a divalent metal cation</name>
        <dbReference type="ChEBI" id="CHEBI:60240"/>
        <label>1</label>
    </ligand>
</feature>
<feature type="binding site" evidence="2">
    <location>
        <position position="64"/>
    </location>
    <ligand>
        <name>a divalent metal cation</name>
        <dbReference type="ChEBI" id="CHEBI:60240"/>
        <label>2</label>
    </ligand>
</feature>
<feature type="binding site" evidence="2">
    <location>
        <position position="102"/>
    </location>
    <ligand>
        <name>a divalent metal cation</name>
        <dbReference type="ChEBI" id="CHEBI:60240"/>
        <label>1</label>
    </ligand>
</feature>
<feature type="binding site" evidence="2">
    <location>
        <position position="209"/>
    </location>
    <ligand>
        <name>a divalent metal cation</name>
        <dbReference type="ChEBI" id="CHEBI:60240"/>
        <label>2</label>
    </ligand>
</feature>
<feature type="binding site" evidence="2">
    <location>
        <position position="213"/>
    </location>
    <ligand>
        <name>a divalent metal cation</name>
        <dbReference type="ChEBI" id="CHEBI:60240"/>
        <label>1</label>
    </ligand>
</feature>
<feature type="binding site" evidence="2">
    <location>
        <position position="213"/>
    </location>
    <ligand>
        <name>a divalent metal cation</name>
        <dbReference type="ChEBI" id="CHEBI:60240"/>
        <label>2</label>
    </ligand>
</feature>
<dbReference type="EC" id="3.5.4.16"/>
<dbReference type="EMBL" id="AE001439">
    <property type="protein sequence ID" value="AAD06461.1"/>
    <property type="molecule type" value="Genomic_DNA"/>
</dbReference>
<dbReference type="PIR" id="F71876">
    <property type="entry name" value="F71876"/>
</dbReference>
<dbReference type="RefSeq" id="WP_001229751.1">
    <property type="nucleotide sequence ID" value="NC_000921.1"/>
</dbReference>
<dbReference type="SMR" id="Q9ZKP2"/>
<dbReference type="KEGG" id="hpj:jhp_0893"/>
<dbReference type="PATRIC" id="fig|85963.30.peg.68"/>
<dbReference type="eggNOG" id="COG0327">
    <property type="taxonomic scope" value="Bacteria"/>
</dbReference>
<dbReference type="UniPathway" id="UPA00848">
    <property type="reaction ID" value="UER00151"/>
</dbReference>
<dbReference type="Proteomes" id="UP000000804">
    <property type="component" value="Chromosome"/>
</dbReference>
<dbReference type="GO" id="GO:0005737">
    <property type="term" value="C:cytoplasm"/>
    <property type="evidence" value="ECO:0007669"/>
    <property type="project" value="TreeGrafter"/>
</dbReference>
<dbReference type="GO" id="GO:0005525">
    <property type="term" value="F:GTP binding"/>
    <property type="evidence" value="ECO:0007669"/>
    <property type="project" value="UniProtKB-KW"/>
</dbReference>
<dbReference type="GO" id="GO:0003934">
    <property type="term" value="F:GTP cyclohydrolase I activity"/>
    <property type="evidence" value="ECO:0007669"/>
    <property type="project" value="UniProtKB-EC"/>
</dbReference>
<dbReference type="GO" id="GO:0046872">
    <property type="term" value="F:metal ion binding"/>
    <property type="evidence" value="ECO:0007669"/>
    <property type="project" value="UniProtKB-KW"/>
</dbReference>
<dbReference type="FunFam" id="3.40.1390.30:FF:000015">
    <property type="entry name" value="Nif3-like dinuclear metal center hexameric protein"/>
    <property type="match status" value="1"/>
</dbReference>
<dbReference type="Gene3D" id="3.40.1390.30">
    <property type="entry name" value="NIF3 (NGG1p interacting factor 3)-like"/>
    <property type="match status" value="2"/>
</dbReference>
<dbReference type="InterPro" id="IPR002678">
    <property type="entry name" value="DUF34/NIF3"/>
</dbReference>
<dbReference type="InterPro" id="IPR036069">
    <property type="entry name" value="DUF34/NIF3_sf"/>
</dbReference>
<dbReference type="NCBIfam" id="TIGR00486">
    <property type="entry name" value="YbgI_SA1388"/>
    <property type="match status" value="1"/>
</dbReference>
<dbReference type="PANTHER" id="PTHR13799:SF14">
    <property type="entry name" value="GTP CYCLOHYDROLASE 1 TYPE 2 HOMOLOG"/>
    <property type="match status" value="1"/>
</dbReference>
<dbReference type="PANTHER" id="PTHR13799">
    <property type="entry name" value="NGG1 INTERACTING FACTOR 3"/>
    <property type="match status" value="1"/>
</dbReference>
<dbReference type="Pfam" id="PF01784">
    <property type="entry name" value="DUF34_NIF3"/>
    <property type="match status" value="1"/>
</dbReference>
<dbReference type="SUPFAM" id="SSF102705">
    <property type="entry name" value="NIF3 (NGG1p interacting factor 3)-like"/>
    <property type="match status" value="1"/>
</dbReference>
<name>GTPC1_HELPJ</name>
<keyword id="KW-0342">GTP-binding</keyword>
<keyword id="KW-0378">Hydrolase</keyword>
<keyword id="KW-0479">Metal-binding</keyword>
<keyword id="KW-0547">Nucleotide-binding</keyword>
<sequence length="243" mass="26973">MALVKEVLEVLNRLSPFELQESWDNSGLNVGSGNSEFSQIIACLEITLQIALNAQENALIITHHPLIFKPLKTLNDEAYPGNILKILIQKNISVISMHTNFDKTHLNKHFARALLRFDGLIEKGLMLVKENANIEFDVLLEKIKLSLGVGQLACVKSSQMIKDLAFVCGSGASMFSSLKAQSCLITGDVKYHDAMIAQSLGISLIDATHYYSERGFALIVAEILHSFNYLVTIENFKNPLQII</sequence>
<accession>Q9ZKP2</accession>
<comment type="function">
    <text evidence="1">Converts GTP to dihydroneopterin triphosphate.</text>
</comment>
<comment type="catalytic activity">
    <reaction evidence="1">
        <text>GTP + H2O = 7,8-dihydroneopterin 3'-triphosphate + formate + H(+)</text>
        <dbReference type="Rhea" id="RHEA:17473"/>
        <dbReference type="ChEBI" id="CHEBI:15377"/>
        <dbReference type="ChEBI" id="CHEBI:15378"/>
        <dbReference type="ChEBI" id="CHEBI:15740"/>
        <dbReference type="ChEBI" id="CHEBI:37565"/>
        <dbReference type="ChEBI" id="CHEBI:58462"/>
        <dbReference type="EC" id="3.5.4.16"/>
    </reaction>
</comment>
<comment type="pathway">
    <text>Cofactor biosynthesis; 7,8-dihydroneopterin triphosphate biosynthesis; 7,8-dihydroneopterin triphosphate from GTP: step 1/1.</text>
</comment>
<comment type="subunit">
    <text evidence="2">Homohexamer.</text>
</comment>
<comment type="similarity">
    <text evidence="3">Belongs to the GTP cyclohydrolase I type 2/NIF3 family.</text>
</comment>
<protein>
    <recommendedName>
        <fullName>GTP cyclohydrolase 1 type 2</fullName>
        <ecNumber>3.5.4.16</ecNumber>
    </recommendedName>
    <alternativeName>
        <fullName>GTP cyclohydrolase I</fullName>
    </alternativeName>
</protein>
<organism>
    <name type="scientific">Helicobacter pylori (strain J99 / ATCC 700824)</name>
    <name type="common">Campylobacter pylori J99</name>
    <dbReference type="NCBI Taxonomy" id="85963"/>
    <lineage>
        <taxon>Bacteria</taxon>
        <taxon>Pseudomonadati</taxon>
        <taxon>Campylobacterota</taxon>
        <taxon>Epsilonproteobacteria</taxon>
        <taxon>Campylobacterales</taxon>
        <taxon>Helicobacteraceae</taxon>
        <taxon>Helicobacter</taxon>
    </lineage>
</organism>